<gene>
    <name evidence="1" type="primary">rraA</name>
    <name type="ordered locus">PSHAa2734</name>
</gene>
<evidence type="ECO:0000255" key="1">
    <source>
        <dbReference type="HAMAP-Rule" id="MF_00471"/>
    </source>
</evidence>
<dbReference type="EMBL" id="CR954246">
    <property type="protein sequence ID" value="CAI87782.1"/>
    <property type="molecule type" value="Genomic_DNA"/>
</dbReference>
<dbReference type="SMR" id="Q3IJD2"/>
<dbReference type="STRING" id="326442.PSHAa2734"/>
<dbReference type="KEGG" id="pha:PSHAa2734"/>
<dbReference type="eggNOG" id="COG0684">
    <property type="taxonomic scope" value="Bacteria"/>
</dbReference>
<dbReference type="HOGENOM" id="CLU_072626_4_0_6"/>
<dbReference type="BioCyc" id="PHAL326442:PSHA_RS13445-MONOMER"/>
<dbReference type="Proteomes" id="UP000006843">
    <property type="component" value="Chromosome I"/>
</dbReference>
<dbReference type="GO" id="GO:0005737">
    <property type="term" value="C:cytoplasm"/>
    <property type="evidence" value="ECO:0007669"/>
    <property type="project" value="UniProtKB-SubCell"/>
</dbReference>
<dbReference type="GO" id="GO:0060698">
    <property type="term" value="F:endoribonuclease inhibitor activity"/>
    <property type="evidence" value="ECO:0007669"/>
    <property type="project" value="UniProtKB-UniRule"/>
</dbReference>
<dbReference type="GO" id="GO:0019899">
    <property type="term" value="F:enzyme binding"/>
    <property type="evidence" value="ECO:0007669"/>
    <property type="project" value="UniProtKB-UniRule"/>
</dbReference>
<dbReference type="GO" id="GO:0051252">
    <property type="term" value="P:regulation of RNA metabolic process"/>
    <property type="evidence" value="ECO:0007669"/>
    <property type="project" value="InterPro"/>
</dbReference>
<dbReference type="CDD" id="cd16841">
    <property type="entry name" value="RraA_family"/>
    <property type="match status" value="1"/>
</dbReference>
<dbReference type="Gene3D" id="3.50.30.40">
    <property type="entry name" value="Ribonuclease E inhibitor RraA/RraA-like"/>
    <property type="match status" value="1"/>
</dbReference>
<dbReference type="HAMAP" id="MF_00471">
    <property type="entry name" value="RraA"/>
    <property type="match status" value="1"/>
</dbReference>
<dbReference type="InterPro" id="IPR010203">
    <property type="entry name" value="RraA"/>
</dbReference>
<dbReference type="InterPro" id="IPR005493">
    <property type="entry name" value="RraA/RraA-like"/>
</dbReference>
<dbReference type="InterPro" id="IPR036704">
    <property type="entry name" value="RraA/RraA-like_sf"/>
</dbReference>
<dbReference type="InterPro" id="IPR014339">
    <property type="entry name" value="RraA_gpbac"/>
</dbReference>
<dbReference type="NCBIfam" id="TIGR01935">
    <property type="entry name" value="NOT-MenG"/>
    <property type="match status" value="1"/>
</dbReference>
<dbReference type="NCBIfam" id="NF006875">
    <property type="entry name" value="PRK09372.1"/>
    <property type="match status" value="1"/>
</dbReference>
<dbReference type="NCBIfam" id="TIGR02998">
    <property type="entry name" value="RraA_entero"/>
    <property type="match status" value="1"/>
</dbReference>
<dbReference type="PANTHER" id="PTHR33254">
    <property type="entry name" value="4-HYDROXY-4-METHYL-2-OXOGLUTARATE ALDOLASE 3-RELATED"/>
    <property type="match status" value="1"/>
</dbReference>
<dbReference type="PANTHER" id="PTHR33254:SF29">
    <property type="entry name" value="REGULATOR OF RIBONUCLEASE ACTIVITY A"/>
    <property type="match status" value="1"/>
</dbReference>
<dbReference type="Pfam" id="PF03737">
    <property type="entry name" value="RraA-like"/>
    <property type="match status" value="1"/>
</dbReference>
<dbReference type="SUPFAM" id="SSF89562">
    <property type="entry name" value="RraA-like"/>
    <property type="match status" value="1"/>
</dbReference>
<sequence length="165" mass="17912">MDYSTSDLCDHFADVVDVLEPMFINFGGRHSFGGRIKTVKCFENNELIRELLSQDGTDLVLLIDGGGSTRRALIDIELAELALENNWQGIIVYGAVRHVDEIEELDLGIQAIASIPVAADSQGAGEDGIGVNFAGVSFFDDDFIYADSTGIVLSAEELELEIVEI</sequence>
<keyword id="KW-0963">Cytoplasm</keyword>
<keyword id="KW-1185">Reference proteome</keyword>
<name>RRAA_PSET1</name>
<reference key="1">
    <citation type="journal article" date="2005" name="Genome Res.">
        <title>Coping with cold: the genome of the versatile marine Antarctica bacterium Pseudoalteromonas haloplanktis TAC125.</title>
        <authorList>
            <person name="Medigue C."/>
            <person name="Krin E."/>
            <person name="Pascal G."/>
            <person name="Barbe V."/>
            <person name="Bernsel A."/>
            <person name="Bertin P.N."/>
            <person name="Cheung F."/>
            <person name="Cruveiller S."/>
            <person name="D'Amico S."/>
            <person name="Duilio A."/>
            <person name="Fang G."/>
            <person name="Feller G."/>
            <person name="Ho C."/>
            <person name="Mangenot S."/>
            <person name="Marino G."/>
            <person name="Nilsson J."/>
            <person name="Parrilli E."/>
            <person name="Rocha E.P.C."/>
            <person name="Rouy Z."/>
            <person name="Sekowska A."/>
            <person name="Tutino M.L."/>
            <person name="Vallenet D."/>
            <person name="von Heijne G."/>
            <person name="Danchin A."/>
        </authorList>
    </citation>
    <scope>NUCLEOTIDE SEQUENCE [LARGE SCALE GENOMIC DNA]</scope>
    <source>
        <strain>TAC 125</strain>
    </source>
</reference>
<proteinExistence type="inferred from homology"/>
<accession>Q3IJD2</accession>
<comment type="function">
    <text evidence="1">Globally modulates RNA abundance by binding to RNase E (Rne) and regulating its endonucleolytic activity. Can modulate Rne action in a substrate-dependent manner by altering the composition of the degradosome. Modulates RNA-binding and helicase activities of the degradosome.</text>
</comment>
<comment type="subunit">
    <text evidence="1">Homotrimer. Binds to both RNA-binding sites in the C-terminal region of Rne and to RhlB.</text>
</comment>
<comment type="subcellular location">
    <subcellularLocation>
        <location evidence="1">Cytoplasm</location>
    </subcellularLocation>
</comment>
<comment type="similarity">
    <text evidence="1">Belongs to the RraA family.</text>
</comment>
<feature type="chain" id="PRO_1000013860" description="Regulator of ribonuclease activity A">
    <location>
        <begin position="1"/>
        <end position="165"/>
    </location>
</feature>
<organism>
    <name type="scientific">Pseudoalteromonas translucida (strain TAC 125)</name>
    <dbReference type="NCBI Taxonomy" id="326442"/>
    <lineage>
        <taxon>Bacteria</taxon>
        <taxon>Pseudomonadati</taxon>
        <taxon>Pseudomonadota</taxon>
        <taxon>Gammaproteobacteria</taxon>
        <taxon>Alteromonadales</taxon>
        <taxon>Pseudoalteromonadaceae</taxon>
        <taxon>Pseudoalteromonas</taxon>
    </lineage>
</organism>
<protein>
    <recommendedName>
        <fullName evidence="1">Regulator of ribonuclease activity A</fullName>
    </recommendedName>
</protein>